<keyword id="KW-0028">Amino-acid biosynthesis</keyword>
<keyword id="KW-0057">Aromatic amino acid biosynthesis</keyword>
<keyword id="KW-0456">Lyase</keyword>
<keyword id="KW-0614">Plasmid</keyword>
<keyword id="KW-1185">Reference proteome</keyword>
<protein>
    <recommendedName>
        <fullName>3-dehydroquinate dehydratase 2</fullName>
        <shortName>3-dehydroquinase 2</shortName>
        <ecNumber>4.2.1.10</ecNumber>
    </recommendedName>
    <alternativeName>
        <fullName>Type II DHQase 2</fullName>
    </alternativeName>
</protein>
<geneLocation type="plasmid">
    <name>megaplasmid Rsp</name>
</geneLocation>
<sequence length="154" mass="16477">MTSILVLNGPNLNLLGTREPAVYGHETLADVERLCREEGERLGHAVACRQSNHEGQLIDWIHEAGRACVRGELLGIVLNAGALTHTSLALHDAIKGASVPVIEYHISNVHAREPFRHHSWIAPAARAVMAGLGVAGYALALRALVLVAPPRQAA</sequence>
<comment type="function">
    <text evidence="1">Catalyzes a trans-dehydration via an enolate intermediate.</text>
</comment>
<comment type="catalytic activity">
    <reaction>
        <text>3-dehydroquinate = 3-dehydroshikimate + H2O</text>
        <dbReference type="Rhea" id="RHEA:21096"/>
        <dbReference type="ChEBI" id="CHEBI:15377"/>
        <dbReference type="ChEBI" id="CHEBI:16630"/>
        <dbReference type="ChEBI" id="CHEBI:32364"/>
        <dbReference type="EC" id="4.2.1.10"/>
    </reaction>
</comment>
<comment type="pathway">
    <text>Metabolic intermediate biosynthesis; chorismate biosynthesis; chorismate from D-erythrose 4-phosphate and phosphoenolpyruvate: step 3/7.</text>
</comment>
<comment type="subunit">
    <text evidence="1">Homododecamer.</text>
</comment>
<comment type="similarity">
    <text evidence="2">Belongs to the type-II 3-dehydroquinase family.</text>
</comment>
<accession>Q8XQ89</accession>
<reference key="1">
    <citation type="journal article" date="2002" name="Nature">
        <title>Genome sequence of the plant pathogen Ralstonia solanacearum.</title>
        <authorList>
            <person name="Salanoubat M."/>
            <person name="Genin S."/>
            <person name="Artiguenave F."/>
            <person name="Gouzy J."/>
            <person name="Mangenot S."/>
            <person name="Arlat M."/>
            <person name="Billault A."/>
            <person name="Brottier P."/>
            <person name="Camus J.-C."/>
            <person name="Cattolico L."/>
            <person name="Chandler M."/>
            <person name="Choisne N."/>
            <person name="Claudel-Renard C."/>
            <person name="Cunnac S."/>
            <person name="Demange N."/>
            <person name="Gaspin C."/>
            <person name="Lavie M."/>
            <person name="Moisan A."/>
            <person name="Robert C."/>
            <person name="Saurin W."/>
            <person name="Schiex T."/>
            <person name="Siguier P."/>
            <person name="Thebault P."/>
            <person name="Whalen M."/>
            <person name="Wincker P."/>
            <person name="Levy M."/>
            <person name="Weissenbach J."/>
            <person name="Boucher C.A."/>
        </authorList>
    </citation>
    <scope>NUCLEOTIDE SEQUENCE [LARGE SCALE GENOMIC DNA]</scope>
    <source>
        <strain>ATCC BAA-1114 / GMI1000</strain>
    </source>
</reference>
<gene>
    <name type="primary">aroQ2</name>
    <name type="ordered locus">RSp1397</name>
    <name type="ORF">RS02061</name>
</gene>
<feature type="chain" id="PRO_0000159924" description="3-dehydroquinate dehydratase 2">
    <location>
        <begin position="1"/>
        <end position="154"/>
    </location>
</feature>
<feature type="active site" description="Proton acceptor" evidence="1">
    <location>
        <position position="23"/>
    </location>
</feature>
<feature type="active site" description="Proton donor" evidence="1">
    <location>
        <position position="105"/>
    </location>
</feature>
<feature type="binding site" evidence="1">
    <location>
        <position position="79"/>
    </location>
    <ligand>
        <name>substrate</name>
    </ligand>
</feature>
<feature type="binding site" evidence="1">
    <location>
        <position position="85"/>
    </location>
    <ligand>
        <name>substrate</name>
    </ligand>
</feature>
<feature type="binding site" evidence="1">
    <location>
        <position position="92"/>
    </location>
    <ligand>
        <name>substrate</name>
    </ligand>
</feature>
<feature type="binding site" evidence="1">
    <location>
        <begin position="106"/>
        <end position="107"/>
    </location>
    <ligand>
        <name>substrate</name>
    </ligand>
</feature>
<feature type="binding site" evidence="1">
    <location>
        <position position="116"/>
    </location>
    <ligand>
        <name>substrate</name>
    </ligand>
</feature>
<feature type="site" description="Transition state stabilizer" evidence="1">
    <location>
        <position position="18"/>
    </location>
</feature>
<proteinExistence type="inferred from homology"/>
<dbReference type="EC" id="4.2.1.10"/>
<dbReference type="EMBL" id="AL646053">
    <property type="protein sequence ID" value="CAD18548.1"/>
    <property type="molecule type" value="Genomic_DNA"/>
</dbReference>
<dbReference type="SMR" id="Q8XQ89"/>
<dbReference type="STRING" id="267608.RSp1397"/>
<dbReference type="EnsemblBacteria" id="CAD18548">
    <property type="protein sequence ID" value="CAD18548"/>
    <property type="gene ID" value="RSp1397"/>
</dbReference>
<dbReference type="KEGG" id="rso:RSp1397"/>
<dbReference type="eggNOG" id="COG0757">
    <property type="taxonomic scope" value="Bacteria"/>
</dbReference>
<dbReference type="HOGENOM" id="CLU_090968_2_0_4"/>
<dbReference type="UniPathway" id="UPA00053">
    <property type="reaction ID" value="UER00086"/>
</dbReference>
<dbReference type="Proteomes" id="UP000001436">
    <property type="component" value="Plasmid megaplasmid Rsp"/>
</dbReference>
<dbReference type="GO" id="GO:0003855">
    <property type="term" value="F:3-dehydroquinate dehydratase activity"/>
    <property type="evidence" value="ECO:0007669"/>
    <property type="project" value="UniProtKB-UniRule"/>
</dbReference>
<dbReference type="GO" id="GO:0008652">
    <property type="term" value="P:amino acid biosynthetic process"/>
    <property type="evidence" value="ECO:0007669"/>
    <property type="project" value="UniProtKB-KW"/>
</dbReference>
<dbReference type="GO" id="GO:0009073">
    <property type="term" value="P:aromatic amino acid family biosynthetic process"/>
    <property type="evidence" value="ECO:0007669"/>
    <property type="project" value="UniProtKB-KW"/>
</dbReference>
<dbReference type="GO" id="GO:0009423">
    <property type="term" value="P:chorismate biosynthetic process"/>
    <property type="evidence" value="ECO:0007669"/>
    <property type="project" value="UniProtKB-UniRule"/>
</dbReference>
<dbReference type="GO" id="GO:0019631">
    <property type="term" value="P:quinate catabolic process"/>
    <property type="evidence" value="ECO:0007669"/>
    <property type="project" value="TreeGrafter"/>
</dbReference>
<dbReference type="CDD" id="cd00466">
    <property type="entry name" value="DHQase_II"/>
    <property type="match status" value="1"/>
</dbReference>
<dbReference type="Gene3D" id="3.40.50.9100">
    <property type="entry name" value="Dehydroquinase, class II"/>
    <property type="match status" value="1"/>
</dbReference>
<dbReference type="HAMAP" id="MF_00169">
    <property type="entry name" value="AroQ"/>
    <property type="match status" value="1"/>
</dbReference>
<dbReference type="InterPro" id="IPR001874">
    <property type="entry name" value="DHquinase_II"/>
</dbReference>
<dbReference type="InterPro" id="IPR018509">
    <property type="entry name" value="DHquinase_II_CS"/>
</dbReference>
<dbReference type="InterPro" id="IPR036441">
    <property type="entry name" value="DHquinase_II_sf"/>
</dbReference>
<dbReference type="NCBIfam" id="TIGR01088">
    <property type="entry name" value="aroQ"/>
    <property type="match status" value="1"/>
</dbReference>
<dbReference type="NCBIfam" id="NF003805">
    <property type="entry name" value="PRK05395.1-2"/>
    <property type="match status" value="1"/>
</dbReference>
<dbReference type="NCBIfam" id="NF003806">
    <property type="entry name" value="PRK05395.1-3"/>
    <property type="match status" value="1"/>
</dbReference>
<dbReference type="NCBIfam" id="NF003807">
    <property type="entry name" value="PRK05395.1-4"/>
    <property type="match status" value="1"/>
</dbReference>
<dbReference type="PANTHER" id="PTHR21272">
    <property type="entry name" value="CATABOLIC 3-DEHYDROQUINASE"/>
    <property type="match status" value="1"/>
</dbReference>
<dbReference type="PANTHER" id="PTHR21272:SF3">
    <property type="entry name" value="CATABOLIC 3-DEHYDROQUINASE"/>
    <property type="match status" value="1"/>
</dbReference>
<dbReference type="Pfam" id="PF01220">
    <property type="entry name" value="DHquinase_II"/>
    <property type="match status" value="1"/>
</dbReference>
<dbReference type="PIRSF" id="PIRSF001399">
    <property type="entry name" value="DHquinase_II"/>
    <property type="match status" value="1"/>
</dbReference>
<dbReference type="SUPFAM" id="SSF52304">
    <property type="entry name" value="Type II 3-dehydroquinate dehydratase"/>
    <property type="match status" value="1"/>
</dbReference>
<dbReference type="PROSITE" id="PS01029">
    <property type="entry name" value="DEHYDROQUINASE_II"/>
    <property type="match status" value="1"/>
</dbReference>
<organism>
    <name type="scientific">Ralstonia nicotianae (strain ATCC BAA-1114 / GMI1000)</name>
    <name type="common">Ralstonia solanacearum</name>
    <dbReference type="NCBI Taxonomy" id="267608"/>
    <lineage>
        <taxon>Bacteria</taxon>
        <taxon>Pseudomonadati</taxon>
        <taxon>Pseudomonadota</taxon>
        <taxon>Betaproteobacteria</taxon>
        <taxon>Burkholderiales</taxon>
        <taxon>Burkholderiaceae</taxon>
        <taxon>Ralstonia</taxon>
        <taxon>Ralstonia solanacearum species complex</taxon>
    </lineage>
</organism>
<evidence type="ECO:0000250" key="1"/>
<evidence type="ECO:0000305" key="2"/>
<name>AROQ2_RALN1</name>